<feature type="chain" id="PRO_0000145558" description="Glyceraldehyde-3-phosphate dehydrogenase 2">
    <location>
        <begin position="1"/>
        <end position="331"/>
    </location>
</feature>
<feature type="active site" description="Nucleophile" evidence="2">
    <location>
        <position position="149"/>
    </location>
</feature>
<feature type="binding site" evidence="1">
    <location>
        <begin position="11"/>
        <end position="12"/>
    </location>
    <ligand>
        <name>NAD(+)</name>
        <dbReference type="ChEBI" id="CHEBI:57540"/>
    </ligand>
</feature>
<feature type="binding site" evidence="1">
    <location>
        <position position="33"/>
    </location>
    <ligand>
        <name>NAD(+)</name>
        <dbReference type="ChEBI" id="CHEBI:57540"/>
    </ligand>
</feature>
<feature type="binding site" evidence="1">
    <location>
        <position position="78"/>
    </location>
    <ligand>
        <name>NAD(+)</name>
        <dbReference type="ChEBI" id="CHEBI:57540"/>
    </ligand>
</feature>
<feature type="binding site" evidence="1">
    <location>
        <begin position="148"/>
        <end position="150"/>
    </location>
    <ligand>
        <name>D-glyceraldehyde 3-phosphate</name>
        <dbReference type="ChEBI" id="CHEBI:59776"/>
    </ligand>
</feature>
<feature type="binding site" evidence="1">
    <location>
        <position position="179"/>
    </location>
    <ligand>
        <name>D-glyceraldehyde 3-phosphate</name>
        <dbReference type="ChEBI" id="CHEBI:59776"/>
    </ligand>
</feature>
<feature type="binding site" evidence="1">
    <location>
        <begin position="208"/>
        <end position="209"/>
    </location>
    <ligand>
        <name>D-glyceraldehyde 3-phosphate</name>
        <dbReference type="ChEBI" id="CHEBI:59776"/>
    </ligand>
</feature>
<feature type="binding site" evidence="1">
    <location>
        <position position="231"/>
    </location>
    <ligand>
        <name>D-glyceraldehyde 3-phosphate</name>
        <dbReference type="ChEBI" id="CHEBI:59776"/>
    </ligand>
</feature>
<feature type="binding site" evidence="1">
    <location>
        <position position="313"/>
    </location>
    <ligand>
        <name>NAD(+)</name>
        <dbReference type="ChEBI" id="CHEBI:57540"/>
    </ligand>
</feature>
<feature type="site" description="Activates thiol group during catalysis" evidence="1">
    <location>
        <position position="176"/>
    </location>
</feature>
<proteinExistence type="inferred from homology"/>
<reference key="1">
    <citation type="journal article" date="1995" name="Yeast">
        <title>Characterization of the glyceraldehyde-3-phosphate dehydrogenase gene family from Kluyveromyces marxianus -- polymerase chain reaction-single-strand conformation polymorphism as a tool for the study of multigenic families.</title>
        <authorList>
            <person name="Fernandes P.A."/>
            <person name="Sena-Esteves M."/>
            <person name="Moradas-Ferreira P."/>
        </authorList>
    </citation>
    <scope>NUCLEOTIDE SEQUENCE [GENOMIC DNA]</scope>
    <source>
        <strain>ATCC 10022 / CBS 6432 / NCTC 2303 / NRRL Y-665</strain>
    </source>
</reference>
<sequence length="331" mass="35540">MVRIAINGFGRIGRLVLRIALSRKNIEVVAINDPFITVDYAAYMFKYDSTHGRFDGEVSHDGKSLIIDGKKVLVFQERDPATLPWGAEKIDIAIDSTGIFKELDSAQKHIDAGAKKVVITAPSSTAPMFVVGVNEDKYAGQTIVSNASCTTNCLAPLAKIINNAFGIEEGLMTTVHSITATQKTVDGPSHKDWRGGRTASGNIIPSSTGAAKAVGKVLPELQGKLTGMAFRVPTVDVSVVDLTVKLAKPATYEEIKAVVKKASENELKGVMGYTEDAVVSSDFLGDTHSSIFDAAAGIQLSPQFVKLVSWYDNEFGYSTRVVDLVELVAKN</sequence>
<name>G3P2_KLUMA</name>
<keyword id="KW-0963">Cytoplasm</keyword>
<keyword id="KW-0324">Glycolysis</keyword>
<keyword id="KW-0520">NAD</keyword>
<keyword id="KW-0560">Oxidoreductase</keyword>
<evidence type="ECO:0000250" key="1"/>
<evidence type="ECO:0000255" key="2">
    <source>
        <dbReference type="PROSITE-ProRule" id="PRU10009"/>
    </source>
</evidence>
<evidence type="ECO:0000305" key="3"/>
<gene>
    <name type="primary">GAP2</name>
</gene>
<protein>
    <recommendedName>
        <fullName>Glyceraldehyde-3-phosphate dehydrogenase 2</fullName>
        <shortName>GAPDH 2</shortName>
        <ecNumber>1.2.1.12</ecNumber>
    </recommendedName>
</protein>
<accession>Q01077</accession>
<organism>
    <name type="scientific">Kluyveromyces marxianus</name>
    <name type="common">Yeast</name>
    <name type="synonym">Candida kefyr</name>
    <dbReference type="NCBI Taxonomy" id="4911"/>
    <lineage>
        <taxon>Eukaryota</taxon>
        <taxon>Fungi</taxon>
        <taxon>Dikarya</taxon>
        <taxon>Ascomycota</taxon>
        <taxon>Saccharomycotina</taxon>
        <taxon>Saccharomycetes</taxon>
        <taxon>Saccharomycetales</taxon>
        <taxon>Saccharomycetaceae</taxon>
        <taxon>Kluyveromyces</taxon>
    </lineage>
</organism>
<dbReference type="EC" id="1.2.1.12"/>
<dbReference type="EMBL" id="AH004790">
    <property type="protein sequence ID" value="AAB35209.1"/>
    <property type="status" value="ALT_INIT"/>
    <property type="molecule type" value="Genomic_DNA"/>
</dbReference>
<dbReference type="PIR" id="S57280">
    <property type="entry name" value="S57280"/>
</dbReference>
<dbReference type="SMR" id="Q01077"/>
<dbReference type="VEuPathDB" id="FungiDB:KLMA_80059"/>
<dbReference type="UniPathway" id="UPA00109">
    <property type="reaction ID" value="UER00184"/>
</dbReference>
<dbReference type="GO" id="GO:0005829">
    <property type="term" value="C:cytosol"/>
    <property type="evidence" value="ECO:0007669"/>
    <property type="project" value="UniProtKB-ARBA"/>
</dbReference>
<dbReference type="GO" id="GO:0030312">
    <property type="term" value="C:external encapsulating structure"/>
    <property type="evidence" value="ECO:0007669"/>
    <property type="project" value="UniProtKB-ARBA"/>
</dbReference>
<dbReference type="GO" id="GO:0004365">
    <property type="term" value="F:glyceraldehyde-3-phosphate dehydrogenase (NAD+) (phosphorylating) activity"/>
    <property type="evidence" value="ECO:0007669"/>
    <property type="project" value="UniProtKB-EC"/>
</dbReference>
<dbReference type="GO" id="GO:0051287">
    <property type="term" value="F:NAD binding"/>
    <property type="evidence" value="ECO:0007669"/>
    <property type="project" value="InterPro"/>
</dbReference>
<dbReference type="GO" id="GO:0050661">
    <property type="term" value="F:NADP binding"/>
    <property type="evidence" value="ECO:0007669"/>
    <property type="project" value="InterPro"/>
</dbReference>
<dbReference type="GO" id="GO:0006006">
    <property type="term" value="P:glucose metabolic process"/>
    <property type="evidence" value="ECO:0007669"/>
    <property type="project" value="InterPro"/>
</dbReference>
<dbReference type="GO" id="GO:0006096">
    <property type="term" value="P:glycolytic process"/>
    <property type="evidence" value="ECO:0007669"/>
    <property type="project" value="UniProtKB-UniPathway"/>
</dbReference>
<dbReference type="CDD" id="cd18126">
    <property type="entry name" value="GAPDH_I_C"/>
    <property type="match status" value="1"/>
</dbReference>
<dbReference type="CDD" id="cd05214">
    <property type="entry name" value="GAPDH_I_N"/>
    <property type="match status" value="1"/>
</dbReference>
<dbReference type="FunFam" id="3.30.360.10:FF:000001">
    <property type="entry name" value="Glyceraldehyde-3-phosphate dehydrogenase"/>
    <property type="match status" value="1"/>
</dbReference>
<dbReference type="FunFam" id="3.40.50.720:FF:000020">
    <property type="entry name" value="Glyceraldehyde-3-phosphate dehydrogenase"/>
    <property type="match status" value="1"/>
</dbReference>
<dbReference type="Gene3D" id="3.30.360.10">
    <property type="entry name" value="Dihydrodipicolinate Reductase, domain 2"/>
    <property type="match status" value="1"/>
</dbReference>
<dbReference type="Gene3D" id="3.40.50.720">
    <property type="entry name" value="NAD(P)-binding Rossmann-like Domain"/>
    <property type="match status" value="1"/>
</dbReference>
<dbReference type="InterPro" id="IPR020831">
    <property type="entry name" value="GlycerAld/Erythrose_P_DH"/>
</dbReference>
<dbReference type="InterPro" id="IPR020830">
    <property type="entry name" value="GlycerAld_3-P_DH_AS"/>
</dbReference>
<dbReference type="InterPro" id="IPR020829">
    <property type="entry name" value="GlycerAld_3-P_DH_cat"/>
</dbReference>
<dbReference type="InterPro" id="IPR020828">
    <property type="entry name" value="GlycerAld_3-P_DH_NAD(P)-bd"/>
</dbReference>
<dbReference type="InterPro" id="IPR006424">
    <property type="entry name" value="Glyceraldehyde-3-P_DH_1"/>
</dbReference>
<dbReference type="InterPro" id="IPR036291">
    <property type="entry name" value="NAD(P)-bd_dom_sf"/>
</dbReference>
<dbReference type="NCBIfam" id="TIGR01534">
    <property type="entry name" value="GAPDH-I"/>
    <property type="match status" value="1"/>
</dbReference>
<dbReference type="PANTHER" id="PTHR10836">
    <property type="entry name" value="GLYCERALDEHYDE 3-PHOSPHATE DEHYDROGENASE"/>
    <property type="match status" value="1"/>
</dbReference>
<dbReference type="PANTHER" id="PTHR10836:SF76">
    <property type="entry name" value="GLYCERALDEHYDE-3-PHOSPHATE DEHYDROGENASE-RELATED"/>
    <property type="match status" value="1"/>
</dbReference>
<dbReference type="Pfam" id="PF02800">
    <property type="entry name" value="Gp_dh_C"/>
    <property type="match status" value="1"/>
</dbReference>
<dbReference type="Pfam" id="PF00044">
    <property type="entry name" value="Gp_dh_N"/>
    <property type="match status" value="1"/>
</dbReference>
<dbReference type="PIRSF" id="PIRSF000149">
    <property type="entry name" value="GAP_DH"/>
    <property type="match status" value="1"/>
</dbReference>
<dbReference type="PRINTS" id="PR00078">
    <property type="entry name" value="G3PDHDRGNASE"/>
</dbReference>
<dbReference type="SMART" id="SM00846">
    <property type="entry name" value="Gp_dh_N"/>
    <property type="match status" value="1"/>
</dbReference>
<dbReference type="SUPFAM" id="SSF55347">
    <property type="entry name" value="Glyceraldehyde-3-phosphate dehydrogenase-like, C-terminal domain"/>
    <property type="match status" value="1"/>
</dbReference>
<dbReference type="SUPFAM" id="SSF51735">
    <property type="entry name" value="NAD(P)-binding Rossmann-fold domains"/>
    <property type="match status" value="1"/>
</dbReference>
<dbReference type="PROSITE" id="PS00071">
    <property type="entry name" value="GAPDH"/>
    <property type="match status" value="1"/>
</dbReference>
<comment type="catalytic activity">
    <reaction evidence="2">
        <text>D-glyceraldehyde 3-phosphate + phosphate + NAD(+) = (2R)-3-phospho-glyceroyl phosphate + NADH + H(+)</text>
        <dbReference type="Rhea" id="RHEA:10300"/>
        <dbReference type="ChEBI" id="CHEBI:15378"/>
        <dbReference type="ChEBI" id="CHEBI:43474"/>
        <dbReference type="ChEBI" id="CHEBI:57540"/>
        <dbReference type="ChEBI" id="CHEBI:57604"/>
        <dbReference type="ChEBI" id="CHEBI:57945"/>
        <dbReference type="ChEBI" id="CHEBI:59776"/>
        <dbReference type="EC" id="1.2.1.12"/>
    </reaction>
</comment>
<comment type="pathway">
    <text>Carbohydrate degradation; glycolysis; pyruvate from D-glyceraldehyde 3-phosphate: step 1/5.</text>
</comment>
<comment type="subunit">
    <text evidence="1">Homotetramer.</text>
</comment>
<comment type="subcellular location">
    <subcellularLocation>
        <location>Cytoplasm</location>
    </subcellularLocation>
</comment>
<comment type="similarity">
    <text evidence="3">Belongs to the glyceraldehyde-3-phosphate dehydrogenase family.</text>
</comment>
<comment type="sequence caution" evidence="3">
    <conflict type="erroneous initiation">
        <sequence resource="EMBL-CDS" id="AAB35209"/>
    </conflict>
    <text>Truncated N-terminus.</text>
</comment>